<protein>
    <recommendedName>
        <fullName evidence="1">Small ribosomal subunit protein uS4</fullName>
    </recommendedName>
    <alternativeName>
        <fullName evidence="2">30S ribosomal protein S4</fullName>
    </alternativeName>
</protein>
<evidence type="ECO:0000255" key="1">
    <source>
        <dbReference type="HAMAP-Rule" id="MF_01306"/>
    </source>
</evidence>
<evidence type="ECO:0000305" key="2"/>
<accession>B8D825</accession>
<dbReference type="EMBL" id="CP001158">
    <property type="protein sequence ID" value="ACL30290.1"/>
    <property type="molecule type" value="Genomic_DNA"/>
</dbReference>
<dbReference type="RefSeq" id="WP_009874451.1">
    <property type="nucleotide sequence ID" value="NC_011834.1"/>
</dbReference>
<dbReference type="SMR" id="B8D825"/>
<dbReference type="KEGG" id="bau:BUAPTUC7_494"/>
<dbReference type="HOGENOM" id="CLU_092403_0_2_6"/>
<dbReference type="GO" id="GO:0015935">
    <property type="term" value="C:small ribosomal subunit"/>
    <property type="evidence" value="ECO:0007669"/>
    <property type="project" value="InterPro"/>
</dbReference>
<dbReference type="GO" id="GO:0019843">
    <property type="term" value="F:rRNA binding"/>
    <property type="evidence" value="ECO:0007669"/>
    <property type="project" value="UniProtKB-UniRule"/>
</dbReference>
<dbReference type="GO" id="GO:0003735">
    <property type="term" value="F:structural constituent of ribosome"/>
    <property type="evidence" value="ECO:0007669"/>
    <property type="project" value="InterPro"/>
</dbReference>
<dbReference type="GO" id="GO:0042274">
    <property type="term" value="P:ribosomal small subunit biogenesis"/>
    <property type="evidence" value="ECO:0007669"/>
    <property type="project" value="TreeGrafter"/>
</dbReference>
<dbReference type="GO" id="GO:0006412">
    <property type="term" value="P:translation"/>
    <property type="evidence" value="ECO:0007669"/>
    <property type="project" value="UniProtKB-UniRule"/>
</dbReference>
<dbReference type="CDD" id="cd00165">
    <property type="entry name" value="S4"/>
    <property type="match status" value="1"/>
</dbReference>
<dbReference type="FunFam" id="1.10.1050.10:FF:000001">
    <property type="entry name" value="30S ribosomal protein S4"/>
    <property type="match status" value="1"/>
</dbReference>
<dbReference type="FunFam" id="3.10.290.10:FF:000001">
    <property type="entry name" value="30S ribosomal protein S4"/>
    <property type="match status" value="1"/>
</dbReference>
<dbReference type="Gene3D" id="1.10.1050.10">
    <property type="entry name" value="Ribosomal Protein S4 Delta 41, Chain A, domain 1"/>
    <property type="match status" value="1"/>
</dbReference>
<dbReference type="Gene3D" id="3.10.290.10">
    <property type="entry name" value="RNA-binding S4 domain"/>
    <property type="match status" value="1"/>
</dbReference>
<dbReference type="HAMAP" id="MF_01306_B">
    <property type="entry name" value="Ribosomal_uS4_B"/>
    <property type="match status" value="1"/>
</dbReference>
<dbReference type="InterPro" id="IPR022801">
    <property type="entry name" value="Ribosomal_uS4"/>
</dbReference>
<dbReference type="InterPro" id="IPR005709">
    <property type="entry name" value="Ribosomal_uS4_bac-type"/>
</dbReference>
<dbReference type="InterPro" id="IPR018079">
    <property type="entry name" value="Ribosomal_uS4_CS"/>
</dbReference>
<dbReference type="InterPro" id="IPR001912">
    <property type="entry name" value="Ribosomal_uS4_N"/>
</dbReference>
<dbReference type="InterPro" id="IPR002942">
    <property type="entry name" value="S4_RNA-bd"/>
</dbReference>
<dbReference type="InterPro" id="IPR036986">
    <property type="entry name" value="S4_RNA-bd_sf"/>
</dbReference>
<dbReference type="NCBIfam" id="NF003717">
    <property type="entry name" value="PRK05327.1"/>
    <property type="match status" value="1"/>
</dbReference>
<dbReference type="NCBIfam" id="TIGR01017">
    <property type="entry name" value="rpsD_bact"/>
    <property type="match status" value="1"/>
</dbReference>
<dbReference type="PANTHER" id="PTHR11831">
    <property type="entry name" value="30S 40S RIBOSOMAL PROTEIN"/>
    <property type="match status" value="1"/>
</dbReference>
<dbReference type="PANTHER" id="PTHR11831:SF4">
    <property type="entry name" value="SMALL RIBOSOMAL SUBUNIT PROTEIN US4M"/>
    <property type="match status" value="1"/>
</dbReference>
<dbReference type="Pfam" id="PF00163">
    <property type="entry name" value="Ribosomal_S4"/>
    <property type="match status" value="1"/>
</dbReference>
<dbReference type="Pfam" id="PF01479">
    <property type="entry name" value="S4"/>
    <property type="match status" value="1"/>
</dbReference>
<dbReference type="SMART" id="SM01390">
    <property type="entry name" value="Ribosomal_S4"/>
    <property type="match status" value="1"/>
</dbReference>
<dbReference type="SMART" id="SM00363">
    <property type="entry name" value="S4"/>
    <property type="match status" value="1"/>
</dbReference>
<dbReference type="SUPFAM" id="SSF55174">
    <property type="entry name" value="Alpha-L RNA-binding motif"/>
    <property type="match status" value="1"/>
</dbReference>
<dbReference type="PROSITE" id="PS00632">
    <property type="entry name" value="RIBOSOMAL_S4"/>
    <property type="match status" value="1"/>
</dbReference>
<dbReference type="PROSITE" id="PS50889">
    <property type="entry name" value="S4"/>
    <property type="match status" value="1"/>
</dbReference>
<gene>
    <name evidence="1" type="primary">rpsD</name>
    <name type="ordered locus">BUAPTUC7_494</name>
</gene>
<proteinExistence type="inferred from homology"/>
<sequence>MAKYLGPKLKLSRREGTDLFLKSGLRSIESKCKLEQPPGQHGIRKPRLSDYAIQLREKQKVRRLYGVLERQFKIYYKLAASLKGNTGANLLQLLESRLDNVVYRMGFGCTRSESRQLINHKSIMVNNKVVNIASYQVSPNDQISIRNKSKNQSRIKAALELVEQREKPIWLEVNSTKMEGIFKRFPERSDLSAEINEYLIVELYSK</sequence>
<keyword id="KW-0687">Ribonucleoprotein</keyword>
<keyword id="KW-0689">Ribosomal protein</keyword>
<keyword id="KW-0694">RNA-binding</keyword>
<keyword id="KW-0699">rRNA-binding</keyword>
<name>RS4_BUCAT</name>
<comment type="function">
    <text evidence="1">One of the primary rRNA binding proteins, it binds directly to 16S rRNA where it nucleates assembly of the body of the 30S subunit.</text>
</comment>
<comment type="function">
    <text evidence="1">With S5 and S12 plays an important role in translational accuracy.</text>
</comment>
<comment type="subunit">
    <text evidence="1">Part of the 30S ribosomal subunit. Contacts protein S5. The interaction surface between S4 and S5 is involved in control of translational fidelity.</text>
</comment>
<comment type="similarity">
    <text evidence="1">Belongs to the universal ribosomal protein uS4 family.</text>
</comment>
<organism>
    <name type="scientific">Buchnera aphidicola subsp. Acyrthosiphon pisum (strain Tuc7)</name>
    <dbReference type="NCBI Taxonomy" id="561501"/>
    <lineage>
        <taxon>Bacteria</taxon>
        <taxon>Pseudomonadati</taxon>
        <taxon>Pseudomonadota</taxon>
        <taxon>Gammaproteobacteria</taxon>
        <taxon>Enterobacterales</taxon>
        <taxon>Erwiniaceae</taxon>
        <taxon>Buchnera</taxon>
    </lineage>
</organism>
<feature type="chain" id="PRO_1000165389" description="Small ribosomal subunit protein uS4">
    <location>
        <begin position="1"/>
        <end position="206"/>
    </location>
</feature>
<feature type="domain" description="S4 RNA-binding" evidence="1">
    <location>
        <begin position="96"/>
        <end position="156"/>
    </location>
</feature>
<reference key="1">
    <citation type="journal article" date="2009" name="Science">
        <title>The dynamics and time scale of ongoing genomic erosion in symbiotic bacteria.</title>
        <authorList>
            <person name="Moran N.A."/>
            <person name="McLaughlin H.J."/>
            <person name="Sorek R."/>
        </authorList>
    </citation>
    <scope>NUCLEOTIDE SEQUENCE [LARGE SCALE GENOMIC DNA]</scope>
    <source>
        <strain>Tuc7</strain>
    </source>
</reference>